<reference key="1">
    <citation type="journal article" date="2008" name="Genomics">
        <title>Evolution in the laboratory: the genome of Halobacterium salinarum strain R1 compared to that of strain NRC-1.</title>
        <authorList>
            <person name="Pfeiffer F."/>
            <person name="Schuster S.C."/>
            <person name="Broicher A."/>
            <person name="Falb M."/>
            <person name="Palm P."/>
            <person name="Rodewald K."/>
            <person name="Ruepp A."/>
            <person name="Soppa J."/>
            <person name="Tittor J."/>
            <person name="Oesterhelt D."/>
        </authorList>
    </citation>
    <scope>NUCLEOTIDE SEQUENCE [LARGE SCALE GENOMIC DNA]</scope>
    <source>
        <strain>ATCC 29341 / DSM 671 / R1</strain>
    </source>
</reference>
<sequence length="387" mass="41474">MTRSVWLKADDEVGDWETRKRRITAGLEAGVDWVLVDRADVARVRELGSVNVAAFSTDDANVIEDAEGTDADPDAYVAGKDGEGDGTVDLPADFSGSADLSALRRGHADTAYVRIRDEEYEPFAQAAAEVADHTIVVGDDWTIIPLENLIARIGEETTLVAGVESAAEAETAFETLDIGADAVLLDSDDPDEIRRTVSVRDAADREHLALSTATITTIEEAGSADRVCVDTGSLLADDEGMLVGSMSRGLFFVHAETAQSPYVAARPFRVNAGAVHAYVRTPDGGTKYLAELGSGDEVQVVDGDGRTRSAVVGRAKIEKRPMFRVEAETDDGDRIETLLQNAETIKVATPNGRTAVTDLSVGDDLHVFLQDGGRHFGEAIDERIIEQ</sequence>
<feature type="chain" id="PRO_0000372044" description="3-dehydroquinate synthase">
    <location>
        <begin position="1"/>
        <end position="387"/>
    </location>
</feature>
<accession>B0R336</accession>
<dbReference type="EC" id="1.4.1.24" evidence="1"/>
<dbReference type="EMBL" id="AM774415">
    <property type="protein sequence ID" value="CAP13146.1"/>
    <property type="molecule type" value="Genomic_DNA"/>
</dbReference>
<dbReference type="RefSeq" id="WP_010902185.1">
    <property type="nucleotide sequence ID" value="NC_010364.1"/>
</dbReference>
<dbReference type="SMR" id="B0R336"/>
<dbReference type="EnsemblBacteria" id="CAP13146">
    <property type="protein sequence ID" value="CAP13146"/>
    <property type="gene ID" value="OE_1475F"/>
</dbReference>
<dbReference type="KEGG" id="hsl:OE_1475F"/>
<dbReference type="HOGENOM" id="CLU_056379_0_0_2"/>
<dbReference type="PhylomeDB" id="B0R336"/>
<dbReference type="Proteomes" id="UP000001321">
    <property type="component" value="Chromosome"/>
</dbReference>
<dbReference type="GO" id="GO:0003856">
    <property type="term" value="F:3-dehydroquinate synthase activity"/>
    <property type="evidence" value="ECO:0007669"/>
    <property type="project" value="InterPro"/>
</dbReference>
<dbReference type="GO" id="GO:0102042">
    <property type="term" value="F:dehydroquinate synthase activity"/>
    <property type="evidence" value="ECO:0007669"/>
    <property type="project" value="UniProtKB-EC"/>
</dbReference>
<dbReference type="GO" id="GO:0051287">
    <property type="term" value="F:NAD binding"/>
    <property type="evidence" value="ECO:0007669"/>
    <property type="project" value="UniProtKB-UniRule"/>
</dbReference>
<dbReference type="GO" id="GO:0008652">
    <property type="term" value="P:amino acid biosynthetic process"/>
    <property type="evidence" value="ECO:0007669"/>
    <property type="project" value="UniProtKB-KW"/>
</dbReference>
<dbReference type="GO" id="GO:0009073">
    <property type="term" value="P:aromatic amino acid family biosynthetic process"/>
    <property type="evidence" value="ECO:0007669"/>
    <property type="project" value="UniProtKB-UniRule"/>
</dbReference>
<dbReference type="HAMAP" id="MF_01244">
    <property type="entry name" value="Arch_DHQ_synthase"/>
    <property type="match status" value="1"/>
</dbReference>
<dbReference type="InterPro" id="IPR002812">
    <property type="entry name" value="DHQ_synth"/>
</dbReference>
<dbReference type="NCBIfam" id="NF002623">
    <property type="entry name" value="PRK02290.1-1"/>
    <property type="match status" value="1"/>
</dbReference>
<dbReference type="PANTHER" id="PTHR33563">
    <property type="match status" value="1"/>
</dbReference>
<dbReference type="PANTHER" id="PTHR33563:SF1">
    <property type="entry name" value="3-DEHYDROQUINATE SYNTHASE"/>
    <property type="match status" value="1"/>
</dbReference>
<dbReference type="Pfam" id="PF01959">
    <property type="entry name" value="DHQS"/>
    <property type="match status" value="1"/>
</dbReference>
<dbReference type="PIRSF" id="PIRSF006655">
    <property type="entry name" value="DHQ_synth"/>
    <property type="match status" value="1"/>
</dbReference>
<proteinExistence type="inferred from homology"/>
<gene>
    <name evidence="1" type="primary">aroB'</name>
    <name type="ordered locus">OE_1475F</name>
</gene>
<name>DHQS_HALS3</name>
<protein>
    <recommendedName>
        <fullName evidence="1">3-dehydroquinate synthase</fullName>
        <shortName evidence="1">DHQ synthase</shortName>
        <ecNumber evidence="1">1.4.1.24</ecNumber>
    </recommendedName>
    <alternativeName>
        <fullName evidence="1">3-dehydroquinate synthase II</fullName>
    </alternativeName>
</protein>
<keyword id="KW-0028">Amino-acid biosynthesis</keyword>
<keyword id="KW-0057">Aromatic amino acid biosynthesis</keyword>
<keyword id="KW-0520">NAD</keyword>
<keyword id="KW-0560">Oxidoreductase</keyword>
<organism>
    <name type="scientific">Halobacterium salinarum (strain ATCC 29341 / DSM 671 / R1)</name>
    <dbReference type="NCBI Taxonomy" id="478009"/>
    <lineage>
        <taxon>Archaea</taxon>
        <taxon>Methanobacteriati</taxon>
        <taxon>Methanobacteriota</taxon>
        <taxon>Stenosarchaea group</taxon>
        <taxon>Halobacteria</taxon>
        <taxon>Halobacteriales</taxon>
        <taxon>Halobacteriaceae</taxon>
        <taxon>Halobacterium</taxon>
        <taxon>Halobacterium salinarum NRC-34001</taxon>
    </lineage>
</organism>
<evidence type="ECO:0000255" key="1">
    <source>
        <dbReference type="HAMAP-Rule" id="MF_01244"/>
    </source>
</evidence>
<comment type="function">
    <text evidence="1">Catalyzes the oxidative deamination and cyclization of 2-amino-3,7-dideoxy-D-threo-hept-6-ulosonic acid (ADH) to yield 3-dehydroquinate (DHQ), which is fed into the canonical shikimic pathway of aromatic amino acid biosynthesis.</text>
</comment>
<comment type="catalytic activity">
    <reaction evidence="1">
        <text>2-amino-2,3,7-trideoxy-D-lyxo-hept-6-ulosonate + NAD(+) + H2O = 3-dehydroquinate + NH4(+) + NADH + H(+)</text>
        <dbReference type="Rhea" id="RHEA:25956"/>
        <dbReference type="ChEBI" id="CHEBI:15377"/>
        <dbReference type="ChEBI" id="CHEBI:15378"/>
        <dbReference type="ChEBI" id="CHEBI:28938"/>
        <dbReference type="ChEBI" id="CHEBI:32364"/>
        <dbReference type="ChEBI" id="CHEBI:57540"/>
        <dbReference type="ChEBI" id="CHEBI:57945"/>
        <dbReference type="ChEBI" id="CHEBI:58859"/>
        <dbReference type="EC" id="1.4.1.24"/>
    </reaction>
</comment>
<comment type="similarity">
    <text evidence="1">Belongs to the archaeal-type DHQ synthase family.</text>
</comment>